<keyword id="KW-0963">Cytoplasm</keyword>
<keyword id="KW-0648">Protein biosynthesis</keyword>
<keyword id="KW-1185">Reference proteome</keyword>
<evidence type="ECO:0000255" key="1">
    <source>
        <dbReference type="HAMAP-Rule" id="MF_00040"/>
    </source>
</evidence>
<accession>B9M5C3</accession>
<comment type="function">
    <text evidence="1">Responsible for the release of ribosomes from messenger RNA at the termination of protein biosynthesis. May increase the efficiency of translation by recycling ribosomes from one round of translation to another.</text>
</comment>
<comment type="subcellular location">
    <subcellularLocation>
        <location evidence="1">Cytoplasm</location>
    </subcellularLocation>
</comment>
<comment type="similarity">
    <text evidence="1">Belongs to the RRF family.</text>
</comment>
<gene>
    <name evidence="1" type="primary">frr</name>
    <name type="ordered locus">Geob_1519</name>
</gene>
<reference key="1">
    <citation type="submission" date="2009-01" db="EMBL/GenBank/DDBJ databases">
        <title>Complete sequence of Geobacter sp. FRC-32.</title>
        <authorList>
            <consortium name="US DOE Joint Genome Institute"/>
            <person name="Lucas S."/>
            <person name="Copeland A."/>
            <person name="Lapidus A."/>
            <person name="Glavina del Rio T."/>
            <person name="Dalin E."/>
            <person name="Tice H."/>
            <person name="Bruce D."/>
            <person name="Goodwin L."/>
            <person name="Pitluck S."/>
            <person name="Saunders E."/>
            <person name="Brettin T."/>
            <person name="Detter J.C."/>
            <person name="Han C."/>
            <person name="Larimer F."/>
            <person name="Land M."/>
            <person name="Hauser L."/>
            <person name="Kyrpides N."/>
            <person name="Ovchinnikova G."/>
            <person name="Kostka J."/>
            <person name="Richardson P."/>
        </authorList>
    </citation>
    <scope>NUCLEOTIDE SEQUENCE [LARGE SCALE GENOMIC DNA]</scope>
    <source>
        <strain>DSM 22248 / JCM 15807 / FRC-32</strain>
    </source>
</reference>
<protein>
    <recommendedName>
        <fullName evidence="1">Ribosome-recycling factor</fullName>
        <shortName evidence="1">RRF</shortName>
    </recommendedName>
    <alternativeName>
        <fullName evidence="1">Ribosome-releasing factor</fullName>
    </alternativeName>
</protein>
<dbReference type="EMBL" id="CP001390">
    <property type="protein sequence ID" value="ACM19878.1"/>
    <property type="molecule type" value="Genomic_DNA"/>
</dbReference>
<dbReference type="RefSeq" id="WP_012646607.1">
    <property type="nucleotide sequence ID" value="NC_011979.1"/>
</dbReference>
<dbReference type="SMR" id="B9M5C3"/>
<dbReference type="STRING" id="316067.Geob_1519"/>
<dbReference type="KEGG" id="geo:Geob_1519"/>
<dbReference type="eggNOG" id="COG0233">
    <property type="taxonomic scope" value="Bacteria"/>
</dbReference>
<dbReference type="HOGENOM" id="CLU_073981_2_0_7"/>
<dbReference type="OrthoDB" id="9804006at2"/>
<dbReference type="Proteomes" id="UP000007721">
    <property type="component" value="Chromosome"/>
</dbReference>
<dbReference type="GO" id="GO:0005829">
    <property type="term" value="C:cytosol"/>
    <property type="evidence" value="ECO:0007669"/>
    <property type="project" value="GOC"/>
</dbReference>
<dbReference type="GO" id="GO:0043023">
    <property type="term" value="F:ribosomal large subunit binding"/>
    <property type="evidence" value="ECO:0007669"/>
    <property type="project" value="TreeGrafter"/>
</dbReference>
<dbReference type="GO" id="GO:0002184">
    <property type="term" value="P:cytoplasmic translational termination"/>
    <property type="evidence" value="ECO:0007669"/>
    <property type="project" value="TreeGrafter"/>
</dbReference>
<dbReference type="CDD" id="cd00520">
    <property type="entry name" value="RRF"/>
    <property type="match status" value="1"/>
</dbReference>
<dbReference type="FunFam" id="1.10.132.20:FF:000001">
    <property type="entry name" value="Ribosome-recycling factor"/>
    <property type="match status" value="1"/>
</dbReference>
<dbReference type="FunFam" id="3.30.1360.40:FF:000001">
    <property type="entry name" value="Ribosome-recycling factor"/>
    <property type="match status" value="1"/>
</dbReference>
<dbReference type="Gene3D" id="3.30.1360.40">
    <property type="match status" value="1"/>
</dbReference>
<dbReference type="Gene3D" id="1.10.132.20">
    <property type="entry name" value="Ribosome-recycling factor"/>
    <property type="match status" value="1"/>
</dbReference>
<dbReference type="HAMAP" id="MF_00040">
    <property type="entry name" value="RRF"/>
    <property type="match status" value="1"/>
</dbReference>
<dbReference type="InterPro" id="IPR002661">
    <property type="entry name" value="Ribosome_recyc_fac"/>
</dbReference>
<dbReference type="InterPro" id="IPR023584">
    <property type="entry name" value="Ribosome_recyc_fac_dom"/>
</dbReference>
<dbReference type="InterPro" id="IPR036191">
    <property type="entry name" value="RRF_sf"/>
</dbReference>
<dbReference type="NCBIfam" id="TIGR00496">
    <property type="entry name" value="frr"/>
    <property type="match status" value="1"/>
</dbReference>
<dbReference type="PANTHER" id="PTHR20982:SF3">
    <property type="entry name" value="MITOCHONDRIAL RIBOSOME RECYCLING FACTOR PSEUDO 1"/>
    <property type="match status" value="1"/>
</dbReference>
<dbReference type="PANTHER" id="PTHR20982">
    <property type="entry name" value="RIBOSOME RECYCLING FACTOR"/>
    <property type="match status" value="1"/>
</dbReference>
<dbReference type="Pfam" id="PF01765">
    <property type="entry name" value="RRF"/>
    <property type="match status" value="1"/>
</dbReference>
<dbReference type="SUPFAM" id="SSF55194">
    <property type="entry name" value="Ribosome recycling factor, RRF"/>
    <property type="match status" value="1"/>
</dbReference>
<feature type="chain" id="PRO_1000194932" description="Ribosome-recycling factor">
    <location>
        <begin position="1"/>
        <end position="185"/>
    </location>
</feature>
<name>RRF_GEODF</name>
<proteinExistence type="inferred from homology"/>
<sequence length="185" mass="21066">MTKDVISGMSSHMDKTIDSLRKEYQKVRTGRASTSLLDEIKVDFYGTLSPLNQVATLAVPEPRTITLQPWDAKMIPPIEKAIMNANLGLTPANDGKLIRLNLPPLTEERRKEIVKQLKKFAEDAKVAVRNIRREAIDDLKKLEKEKKISEDDLKRAEKDVQDVTNSHVARIDEVLLHKEKEVMEV</sequence>
<organism>
    <name type="scientific">Geotalea daltonii (strain DSM 22248 / JCM 15807 / FRC-32)</name>
    <name type="common">Geobacter daltonii</name>
    <dbReference type="NCBI Taxonomy" id="316067"/>
    <lineage>
        <taxon>Bacteria</taxon>
        <taxon>Pseudomonadati</taxon>
        <taxon>Thermodesulfobacteriota</taxon>
        <taxon>Desulfuromonadia</taxon>
        <taxon>Geobacterales</taxon>
        <taxon>Geobacteraceae</taxon>
        <taxon>Geotalea</taxon>
    </lineage>
</organism>